<proteinExistence type="evidence at transcript level"/>
<feature type="chain" id="PRO_0000094563" description="Disks large homolog 4">
    <location>
        <begin position="1"/>
        <end position="801"/>
    </location>
</feature>
<feature type="domain" description="L27" evidence="5">
    <location>
        <begin position="4"/>
        <end position="60"/>
    </location>
</feature>
<feature type="domain" description="PDZ 1" evidence="3">
    <location>
        <begin position="153"/>
        <end position="240"/>
    </location>
</feature>
<feature type="domain" description="PDZ 2" evidence="3">
    <location>
        <begin position="248"/>
        <end position="335"/>
    </location>
</feature>
<feature type="domain" description="PDZ 3" evidence="3">
    <location>
        <begin position="393"/>
        <end position="474"/>
    </location>
</feature>
<feature type="domain" description="SH3" evidence="4">
    <location>
        <begin position="507"/>
        <end position="577"/>
    </location>
</feature>
<feature type="domain" description="Guanylate kinase-like" evidence="2">
    <location>
        <begin position="610"/>
        <end position="786"/>
    </location>
</feature>
<feature type="region of interest" description="Disordered" evidence="6">
    <location>
        <begin position="339"/>
        <end position="373"/>
    </location>
</feature>
<comment type="function">
    <text evidence="8">Postsynaptic scaffolding protein that plays a critical role in synaptogenesis and synaptic plasticity by providing a platform for the postsynaptic clustering of crucial synaptic proteins.</text>
</comment>
<comment type="subcellular location">
    <subcellularLocation>
        <location evidence="7">Cell membrane</location>
        <topology evidence="7">Peripheral membrane protein</topology>
    </subcellularLocation>
    <subcellularLocation>
        <location evidence="7">Postsynaptic density</location>
    </subcellularLocation>
    <subcellularLocation>
        <location evidence="7">Synapse</location>
    </subcellularLocation>
    <text>High levels in postsynaptic density of neuronal cells.</text>
</comment>
<comment type="developmental stage">
    <text evidence="7 8">At 3 days-post-fertilization (dpf), expressed strongly in neurons in the ventral hindbrain and tegmentum and diffusely in the dorsal hindbrain and optic tectum. Also expressed in the diencephalon and the prospective olfactory bulb. Expression in non-spiny type-XIV tectal neurons is mostly diffuse. Over the next 7 days, as the dendritic arbor develops, expression becomes progressively more punctate, becoming localized to sites of synapse formation. At 4 dpf, expressed in the inner and outer plexiform layers of the retina and in the optic chiasm.</text>
</comment>
<comment type="domain">
    <text evidence="1">L27 domain is required for targeting to postsynaptic density.</text>
</comment>
<comment type="PTM">
    <text evidence="1">Ubiquitinated by MDM2 in response to NMDA receptor activation, leading to proteasome-mediated degradation of DLG4 which is required for AMPA receptor endocytosis.</text>
</comment>
<comment type="PTM">
    <text evidence="1">Palmitoylated. Palmitoylation is required for targeting to postsynaptic density, plasma membrane and synapses.</text>
</comment>
<comment type="similarity">
    <text evidence="9">Belongs to the MAGUK family.</text>
</comment>
<protein>
    <recommendedName>
        <fullName>Disks large homolog 4</fullName>
    </recommendedName>
    <alternativeName>
        <fullName>Postsynaptic density protein 95</fullName>
        <shortName>PSD-95</shortName>
    </alternativeName>
</protein>
<name>DLG4_DANRE</name>
<dbReference type="EMBL" id="AY520570">
    <property type="protein sequence ID" value="AAS00608.1"/>
    <property type="molecule type" value="mRNA"/>
</dbReference>
<dbReference type="RefSeq" id="NP_999893.1">
    <property type="nucleotide sequence ID" value="NM_214728.1"/>
</dbReference>
<dbReference type="SMR" id="Q6R005"/>
<dbReference type="FunCoup" id="Q6R005">
    <property type="interactions" value="170"/>
</dbReference>
<dbReference type="STRING" id="7955.ENSDARP00000048431"/>
<dbReference type="PaxDb" id="7955-ENSDARP00000042429"/>
<dbReference type="ABCD" id="Q6R005">
    <property type="antibodies" value="1 sequenced antibody"/>
</dbReference>
<dbReference type="GeneID" id="405796"/>
<dbReference type="KEGG" id="dre:405796"/>
<dbReference type="AGR" id="ZFIN:ZDB-GENE-040628-3"/>
<dbReference type="CTD" id="405796"/>
<dbReference type="ZFIN" id="ZDB-GENE-040628-3">
    <property type="gene designation" value="dlg4b"/>
</dbReference>
<dbReference type="eggNOG" id="KOG0708">
    <property type="taxonomic scope" value="Eukaryota"/>
</dbReference>
<dbReference type="InParanoid" id="Q6R005"/>
<dbReference type="OrthoDB" id="78824at2759"/>
<dbReference type="PhylomeDB" id="Q6R005"/>
<dbReference type="Reactome" id="R-DRE-438066">
    <property type="pathway name" value="Unblocking of NMDA receptors, glutamate binding and activation"/>
</dbReference>
<dbReference type="Reactome" id="R-DRE-8849932">
    <property type="pathway name" value="Synaptic adhesion-like molecules"/>
</dbReference>
<dbReference type="PRO" id="PR:Q6R005"/>
<dbReference type="Proteomes" id="UP000000437">
    <property type="component" value="Chromosome 23"/>
</dbReference>
<dbReference type="GO" id="GO:0031594">
    <property type="term" value="C:neuromuscular junction"/>
    <property type="evidence" value="ECO:0000318"/>
    <property type="project" value="GO_Central"/>
</dbReference>
<dbReference type="GO" id="GO:0043005">
    <property type="term" value="C:neuron projection"/>
    <property type="evidence" value="ECO:0000318"/>
    <property type="project" value="GO_Central"/>
</dbReference>
<dbReference type="GO" id="GO:0014069">
    <property type="term" value="C:postsynaptic density"/>
    <property type="evidence" value="ECO:0000250"/>
    <property type="project" value="UniProtKB"/>
</dbReference>
<dbReference type="GO" id="GO:0098839">
    <property type="term" value="C:postsynaptic density membrane"/>
    <property type="evidence" value="ECO:0000318"/>
    <property type="project" value="GO_Central"/>
</dbReference>
<dbReference type="GO" id="GO:0045202">
    <property type="term" value="C:synapse"/>
    <property type="evidence" value="ECO:0000314"/>
    <property type="project" value="UniProtKB"/>
</dbReference>
<dbReference type="GO" id="GO:0035255">
    <property type="term" value="F:ionotropic glutamate receptor binding"/>
    <property type="evidence" value="ECO:0000318"/>
    <property type="project" value="GO_Central"/>
</dbReference>
<dbReference type="GO" id="GO:0046982">
    <property type="term" value="F:protein heterodimerization activity"/>
    <property type="evidence" value="ECO:0000353"/>
    <property type="project" value="ZFIN"/>
</dbReference>
<dbReference type="GO" id="GO:0019901">
    <property type="term" value="F:protein kinase binding"/>
    <property type="evidence" value="ECO:0000318"/>
    <property type="project" value="GO_Central"/>
</dbReference>
<dbReference type="GO" id="GO:0097113">
    <property type="term" value="P:AMPA glutamate receptor clustering"/>
    <property type="evidence" value="ECO:0000318"/>
    <property type="project" value="GO_Central"/>
</dbReference>
<dbReference type="GO" id="GO:0098609">
    <property type="term" value="P:cell-cell adhesion"/>
    <property type="evidence" value="ECO:0000318"/>
    <property type="project" value="GO_Central"/>
</dbReference>
<dbReference type="GO" id="GO:0007268">
    <property type="term" value="P:chemical synaptic transmission"/>
    <property type="evidence" value="ECO:0000318"/>
    <property type="project" value="GO_Central"/>
</dbReference>
<dbReference type="GO" id="GO:0007399">
    <property type="term" value="P:nervous system development"/>
    <property type="evidence" value="ECO:0000318"/>
    <property type="project" value="GO_Central"/>
</dbReference>
<dbReference type="GO" id="GO:0035418">
    <property type="term" value="P:protein localization to synapse"/>
    <property type="evidence" value="ECO:0000318"/>
    <property type="project" value="GO_Central"/>
</dbReference>
<dbReference type="GO" id="GO:0097120">
    <property type="term" value="P:receptor localization to synapse"/>
    <property type="evidence" value="ECO:0000318"/>
    <property type="project" value="GO_Central"/>
</dbReference>
<dbReference type="GO" id="GO:0099072">
    <property type="term" value="P:regulation of postsynaptic membrane neurotransmitter receptor levels"/>
    <property type="evidence" value="ECO:0000318"/>
    <property type="project" value="GO_Central"/>
</dbReference>
<dbReference type="GO" id="GO:0050808">
    <property type="term" value="P:synapse organization"/>
    <property type="evidence" value="ECO:0000303"/>
    <property type="project" value="UniProtKB"/>
</dbReference>
<dbReference type="CDD" id="cd00071">
    <property type="entry name" value="GMPK"/>
    <property type="match status" value="1"/>
</dbReference>
<dbReference type="CDD" id="cd06723">
    <property type="entry name" value="PDZ1_Dlg1-2-4-like"/>
    <property type="match status" value="1"/>
</dbReference>
<dbReference type="CDD" id="cd06724">
    <property type="entry name" value="PDZ2_Dlg1-2-4-like"/>
    <property type="match status" value="1"/>
</dbReference>
<dbReference type="CDD" id="cd06795">
    <property type="entry name" value="PDZ3_Dlg1-2-4-like"/>
    <property type="match status" value="1"/>
</dbReference>
<dbReference type="FunFam" id="3.40.50.300:FF:001402">
    <property type="entry name" value="Discs, large homolog 3 (Drosophila)"/>
    <property type="match status" value="1"/>
</dbReference>
<dbReference type="FunFam" id="1.10.287.470:FF:000068">
    <property type="entry name" value="Discs, large homolog 4b (Drosophila)"/>
    <property type="match status" value="1"/>
</dbReference>
<dbReference type="FunFam" id="2.30.42.10:FF:000001">
    <property type="entry name" value="Disks large homolog 1 isoform 2"/>
    <property type="match status" value="1"/>
</dbReference>
<dbReference type="FunFam" id="3.30.63.10:FF:000001">
    <property type="entry name" value="Disks large homolog 1 isoform 2"/>
    <property type="match status" value="1"/>
</dbReference>
<dbReference type="FunFam" id="2.30.42.10:FF:000049">
    <property type="entry name" value="disks large homolog 1 isoform X1"/>
    <property type="match status" value="1"/>
</dbReference>
<dbReference type="FunFam" id="2.30.30.40:FF:000047">
    <property type="entry name" value="Disks large homolog 2 isoform 3"/>
    <property type="match status" value="1"/>
</dbReference>
<dbReference type="FunFam" id="2.30.42.10:FF:000002">
    <property type="entry name" value="Disks large homolog 4 isoform 2"/>
    <property type="match status" value="1"/>
</dbReference>
<dbReference type="Gene3D" id="2.30.42.10">
    <property type="match status" value="3"/>
</dbReference>
<dbReference type="Gene3D" id="3.30.63.10">
    <property type="entry name" value="Guanylate Kinase phosphate binding domain"/>
    <property type="match status" value="1"/>
</dbReference>
<dbReference type="Gene3D" id="1.10.287.470">
    <property type="entry name" value="Helix hairpin bin"/>
    <property type="match status" value="1"/>
</dbReference>
<dbReference type="Gene3D" id="3.40.50.300">
    <property type="entry name" value="P-loop containing nucleotide triphosphate hydrolases"/>
    <property type="match status" value="1"/>
</dbReference>
<dbReference type="Gene3D" id="2.30.30.40">
    <property type="entry name" value="SH3 Domains"/>
    <property type="match status" value="1"/>
</dbReference>
<dbReference type="InterPro" id="IPR019583">
    <property type="entry name" value="DLG1-4_PDZ_assoc"/>
</dbReference>
<dbReference type="InterPro" id="IPR016313">
    <property type="entry name" value="DLG1-like"/>
</dbReference>
<dbReference type="InterPro" id="IPR019590">
    <property type="entry name" value="DLG1_PEST_dom"/>
</dbReference>
<dbReference type="InterPro" id="IPR008145">
    <property type="entry name" value="GK/Ca_channel_bsu"/>
</dbReference>
<dbReference type="InterPro" id="IPR008144">
    <property type="entry name" value="Guanylate_kin-like_dom"/>
</dbReference>
<dbReference type="InterPro" id="IPR020590">
    <property type="entry name" value="Guanylate_kinase_CS"/>
</dbReference>
<dbReference type="InterPro" id="IPR015143">
    <property type="entry name" value="L27_1"/>
</dbReference>
<dbReference type="InterPro" id="IPR004172">
    <property type="entry name" value="L27_dom"/>
</dbReference>
<dbReference type="InterPro" id="IPR036892">
    <property type="entry name" value="L27_dom_sf"/>
</dbReference>
<dbReference type="InterPro" id="IPR027417">
    <property type="entry name" value="P-loop_NTPase"/>
</dbReference>
<dbReference type="InterPro" id="IPR001478">
    <property type="entry name" value="PDZ"/>
</dbReference>
<dbReference type="InterPro" id="IPR036034">
    <property type="entry name" value="PDZ_sf"/>
</dbReference>
<dbReference type="InterPro" id="IPR036028">
    <property type="entry name" value="SH3-like_dom_sf"/>
</dbReference>
<dbReference type="InterPro" id="IPR001452">
    <property type="entry name" value="SH3_domain"/>
</dbReference>
<dbReference type="InterPro" id="IPR050614">
    <property type="entry name" value="Synaptic_Scaffolding_LAP-MAGUK"/>
</dbReference>
<dbReference type="PANTHER" id="PTHR23119">
    <property type="entry name" value="DISCS LARGE"/>
    <property type="match status" value="1"/>
</dbReference>
<dbReference type="PANTHER" id="PTHR23119:SF33">
    <property type="entry name" value="DISKS LARGE HOMOLOG 4"/>
    <property type="match status" value="1"/>
</dbReference>
<dbReference type="Pfam" id="PF00625">
    <property type="entry name" value="Guanylate_kin"/>
    <property type="match status" value="1"/>
</dbReference>
<dbReference type="Pfam" id="PF09058">
    <property type="entry name" value="L27_1"/>
    <property type="match status" value="1"/>
</dbReference>
<dbReference type="Pfam" id="PF10608">
    <property type="entry name" value="MAGUK_N_PEST"/>
    <property type="match status" value="1"/>
</dbReference>
<dbReference type="Pfam" id="PF00595">
    <property type="entry name" value="PDZ"/>
    <property type="match status" value="3"/>
</dbReference>
<dbReference type="Pfam" id="PF10600">
    <property type="entry name" value="PDZ_assoc"/>
    <property type="match status" value="1"/>
</dbReference>
<dbReference type="PIRSF" id="PIRSF001741">
    <property type="entry name" value="MAGUK_DLGH"/>
    <property type="match status" value="1"/>
</dbReference>
<dbReference type="SMART" id="SM00072">
    <property type="entry name" value="GuKc"/>
    <property type="match status" value="1"/>
</dbReference>
<dbReference type="SMART" id="SM01277">
    <property type="entry name" value="MAGUK_N_PEST"/>
    <property type="match status" value="1"/>
</dbReference>
<dbReference type="SMART" id="SM00228">
    <property type="entry name" value="PDZ"/>
    <property type="match status" value="3"/>
</dbReference>
<dbReference type="SMART" id="SM00326">
    <property type="entry name" value="SH3"/>
    <property type="match status" value="1"/>
</dbReference>
<dbReference type="SUPFAM" id="SSF101288">
    <property type="entry name" value="L27 domain"/>
    <property type="match status" value="1"/>
</dbReference>
<dbReference type="SUPFAM" id="SSF52540">
    <property type="entry name" value="P-loop containing nucleoside triphosphate hydrolases"/>
    <property type="match status" value="1"/>
</dbReference>
<dbReference type="SUPFAM" id="SSF50156">
    <property type="entry name" value="PDZ domain-like"/>
    <property type="match status" value="3"/>
</dbReference>
<dbReference type="SUPFAM" id="SSF50044">
    <property type="entry name" value="SH3-domain"/>
    <property type="match status" value="1"/>
</dbReference>
<dbReference type="PROSITE" id="PS00856">
    <property type="entry name" value="GUANYLATE_KINASE_1"/>
    <property type="match status" value="1"/>
</dbReference>
<dbReference type="PROSITE" id="PS50052">
    <property type="entry name" value="GUANYLATE_KINASE_2"/>
    <property type="match status" value="1"/>
</dbReference>
<dbReference type="PROSITE" id="PS51022">
    <property type="entry name" value="L27"/>
    <property type="match status" value="1"/>
</dbReference>
<dbReference type="PROSITE" id="PS50106">
    <property type="entry name" value="PDZ"/>
    <property type="match status" value="3"/>
</dbReference>
<dbReference type="PROSITE" id="PS50002">
    <property type="entry name" value="SH3"/>
    <property type="match status" value="1"/>
</dbReference>
<evidence type="ECO:0000250" key="1">
    <source>
        <dbReference type="UniProtKB" id="P31016"/>
    </source>
</evidence>
<evidence type="ECO:0000255" key="2">
    <source>
        <dbReference type="PROSITE-ProRule" id="PRU00100"/>
    </source>
</evidence>
<evidence type="ECO:0000255" key="3">
    <source>
        <dbReference type="PROSITE-ProRule" id="PRU00143"/>
    </source>
</evidence>
<evidence type="ECO:0000255" key="4">
    <source>
        <dbReference type="PROSITE-ProRule" id="PRU00192"/>
    </source>
</evidence>
<evidence type="ECO:0000255" key="5">
    <source>
        <dbReference type="PROSITE-ProRule" id="PRU00365"/>
    </source>
</evidence>
<evidence type="ECO:0000256" key="6">
    <source>
        <dbReference type="SAM" id="MobiDB-lite"/>
    </source>
</evidence>
<evidence type="ECO:0000269" key="7">
    <source>
    </source>
</evidence>
<evidence type="ECO:0000269" key="8">
    <source>
    </source>
</evidence>
<evidence type="ECO:0000305" key="9"/>
<gene>
    <name type="primary">dlg4</name>
</gene>
<sequence length="801" mass="89140">MPLKREDTERALQAMEACQSAGDEGFRTRAERLLTIFQSDLFQALLDIQEFYELTVFENQTAGRALTPGLKYRYHDEETPPLQHSPAHLSTGKSAEMLHLGDSGHAPIDGIHAYTPQMHVSPAKPVLLPSGHAPYYATSTLMNGMDGDVEYEEITLERGNSGLGFSIAGGTDNPHIGDDPSIFITKIIPGGAAAQDGRLRVNDSILFVNDVDVREVTHSFAVEALKEAGPIVRLYVLRHKPSAEKITELKLIKGPKGLGFSIAGGVGNQHVPGDNSIYVTKIIEGGAAHKDGRLQIGDKILAVNNMYLEEVMHEDAVAALKNTGDVVFLRVAKTLHQHHHQDAYNPPDITSSYSPHMDMSDYPQALSPSSPRRYSPIPKGLFLDDDISREPRRVVIHRGSTGLGFNIVGGEDGEGIFISFILAGGAADLSGELRKGDQILSVNGVDLRHATHEQAAAALKNAGQTVTIITQYRPEEYSRFEAKIHDLREQLMNSSLVSAAASLRSGKRSFFIRALFDYDKTADGGFLSQAVSFRFGDVLQVFDCSDEEWWQAGKLAPHGELEETGYIPSKRRVERKEWSRLKTRGREPVSGRSDYIVSYETVTQSEVHYARPVIILGPSKDRVNDDLLSEFPDKFGSCVPHTTRPKREYEMDGRDYHFVSSREQMEKDIQSHRFIEAGQYNSHLYGTSVQSVRQVAEQQGKHCILDVSANAVRRLQAAQLYPIAIFIRPSSLQNVLNISKRLTEEQARRALDRAVKLEQDFIECFSAIVEGESFEEIYHHVKSVIEEQSGPYIWIPARERL</sequence>
<organism>
    <name type="scientific">Danio rerio</name>
    <name type="common">Zebrafish</name>
    <name type="synonym">Brachydanio rerio</name>
    <dbReference type="NCBI Taxonomy" id="7955"/>
    <lineage>
        <taxon>Eukaryota</taxon>
        <taxon>Metazoa</taxon>
        <taxon>Chordata</taxon>
        <taxon>Craniata</taxon>
        <taxon>Vertebrata</taxon>
        <taxon>Euteleostomi</taxon>
        <taxon>Actinopterygii</taxon>
        <taxon>Neopterygii</taxon>
        <taxon>Teleostei</taxon>
        <taxon>Ostariophysi</taxon>
        <taxon>Cypriniformes</taxon>
        <taxon>Danionidae</taxon>
        <taxon>Danioninae</taxon>
        <taxon>Danio</taxon>
    </lineage>
</organism>
<reference key="1">
    <citation type="journal article" date="2004" name="Nat. Neurosci.">
        <title>In vivo imaging of synapse formation on a growing dendritic arbor.</title>
        <authorList>
            <person name="Niell C.M."/>
            <person name="Meyer M.P."/>
            <person name="Smith S.J."/>
        </authorList>
    </citation>
    <scope>NUCLEOTIDE SEQUENCE [MRNA]</scope>
    <scope>SUBCELLULAR LOCATION</scope>
    <scope>DEVELOPMENTAL STAGE</scope>
    <source>
        <tissue>Retina</tissue>
    </source>
</reference>
<reference key="2">
    <citation type="journal article" date="2005" name="J. Neurobiol.">
        <title>Characterization of zebrafish PSD-95 gene family members.</title>
        <authorList>
            <person name="Meyer M.P."/>
            <person name="Trimmer J.S."/>
            <person name="Gilthorpe J.D."/>
            <person name="Smith S.J."/>
        </authorList>
    </citation>
    <scope>FUNCTION</scope>
    <scope>DEVELOPMENTAL STAGE</scope>
</reference>
<keyword id="KW-1003">Cell membrane</keyword>
<keyword id="KW-0472">Membrane</keyword>
<keyword id="KW-1185">Reference proteome</keyword>
<keyword id="KW-0677">Repeat</keyword>
<keyword id="KW-0728">SH3 domain</keyword>
<keyword id="KW-0770">Synapse</keyword>
<keyword id="KW-0832">Ubl conjugation</keyword>
<accession>Q6R005</accession>